<comment type="function">
    <text evidence="1">A type II topoisomerase that negatively supercoils closed circular double-stranded (ds) DNA in an ATP-dependent manner to modulate DNA topology and maintain chromosomes in an underwound state. Negative supercoiling favors strand separation, and DNA replication, transcription, recombination and repair, all of which involve strand separation. Also able to catalyze the interconversion of other topological isomers of dsDNA rings, including catenanes and knotted rings. Type II topoisomerases break and join 2 DNA strands simultaneously in an ATP-dependent manner.</text>
</comment>
<comment type="catalytic activity">
    <reaction evidence="1">
        <text>ATP-dependent breakage, passage and rejoining of double-stranded DNA.</text>
        <dbReference type="EC" id="5.6.2.2"/>
    </reaction>
</comment>
<comment type="subunit">
    <text evidence="1">Heterotetramer, composed of two GyrA and two GyrB chains. In the heterotetramer, GyrA contains the active site tyrosine that forms a transient covalent intermediate with DNA, while GyrB binds cofactors and catalyzes ATP hydrolysis.</text>
</comment>
<comment type="subcellular location">
    <subcellularLocation>
        <location evidence="1">Cytoplasm</location>
    </subcellularLocation>
</comment>
<comment type="miscellaneous">
    <text evidence="1">Few gyrases are as efficient as E.coli at forming negative supercoils. Not all organisms have 2 type II topoisomerases; in organisms with a single type II topoisomerase this enzyme also has to decatenate newly replicated chromosomes.</text>
</comment>
<comment type="similarity">
    <text evidence="2">Belongs to the type II topoisomerase GyrB family.</text>
</comment>
<reference key="1">
    <citation type="journal article" date="1990" name="Gene">
        <title>Nucleotide sequence of a Proteus mirabilis DNA fragment homologous to the 60K-rnpA-rpmH-dnaA-dnaN-recF-gyrB region of Escherichia coli.</title>
        <authorList>
            <person name="Skovgaard O."/>
        </authorList>
    </citation>
    <scope>NUCLEOTIDE SEQUENCE [GENOMIC DNA]</scope>
    <source>
        <strain>LM1509</strain>
    </source>
</reference>
<organism>
    <name type="scientific">Proteus mirabilis</name>
    <dbReference type="NCBI Taxonomy" id="584"/>
    <lineage>
        <taxon>Bacteria</taxon>
        <taxon>Pseudomonadati</taxon>
        <taxon>Pseudomonadota</taxon>
        <taxon>Gammaproteobacteria</taxon>
        <taxon>Enterobacterales</taxon>
        <taxon>Morganellaceae</taxon>
        <taxon>Proteus</taxon>
    </lineage>
</organism>
<proteinExistence type="inferred from homology"/>
<keyword id="KW-0067">ATP-binding</keyword>
<keyword id="KW-0963">Cytoplasm</keyword>
<keyword id="KW-0238">DNA-binding</keyword>
<keyword id="KW-0413">Isomerase</keyword>
<keyword id="KW-0547">Nucleotide-binding</keyword>
<keyword id="KW-0799">Topoisomerase</keyword>
<protein>
    <recommendedName>
        <fullName>DNA gyrase subunit B</fullName>
        <ecNumber evidence="1">5.6.2.2</ecNumber>
    </recommendedName>
</protein>
<dbReference type="EC" id="5.6.2.2" evidence="1"/>
<dbReference type="EMBL" id="M58352">
    <property type="protein sequence ID" value="AAA83961.1"/>
    <property type="molecule type" value="Genomic_DNA"/>
</dbReference>
<dbReference type="PIR" id="JQ0736">
    <property type="entry name" value="JQ0736"/>
</dbReference>
<dbReference type="SMR" id="P22840"/>
<dbReference type="STRING" id="584.AOUC001_18980"/>
<dbReference type="GO" id="GO:0005737">
    <property type="term" value="C:cytoplasm"/>
    <property type="evidence" value="ECO:0007669"/>
    <property type="project" value="UniProtKB-SubCell"/>
</dbReference>
<dbReference type="GO" id="GO:0005524">
    <property type="term" value="F:ATP binding"/>
    <property type="evidence" value="ECO:0007669"/>
    <property type="project" value="UniProtKB-KW"/>
</dbReference>
<dbReference type="GO" id="GO:0003677">
    <property type="term" value="F:DNA binding"/>
    <property type="evidence" value="ECO:0007669"/>
    <property type="project" value="UniProtKB-KW"/>
</dbReference>
<dbReference type="GO" id="GO:0003918">
    <property type="term" value="F:DNA topoisomerase type II (double strand cut, ATP-hydrolyzing) activity"/>
    <property type="evidence" value="ECO:0007669"/>
    <property type="project" value="UniProtKB-EC"/>
</dbReference>
<dbReference type="GO" id="GO:0006265">
    <property type="term" value="P:DNA topological change"/>
    <property type="evidence" value="ECO:0007669"/>
    <property type="project" value="InterPro"/>
</dbReference>
<dbReference type="CDD" id="cd16928">
    <property type="entry name" value="HATPase_GyrB-like"/>
    <property type="match status" value="1"/>
</dbReference>
<dbReference type="FunFam" id="3.30.565.10:FF:000002">
    <property type="entry name" value="DNA gyrase subunit B"/>
    <property type="match status" value="1"/>
</dbReference>
<dbReference type="Gene3D" id="3.30.565.10">
    <property type="entry name" value="Histidine kinase-like ATPase, C-terminal domain"/>
    <property type="match status" value="1"/>
</dbReference>
<dbReference type="InterPro" id="IPR036890">
    <property type="entry name" value="HATPase_C_sf"/>
</dbReference>
<dbReference type="InterPro" id="IPR001241">
    <property type="entry name" value="Topo_IIA"/>
</dbReference>
<dbReference type="PANTHER" id="PTHR45866:SF1">
    <property type="entry name" value="DNA GYRASE SUBUNIT B, MITOCHONDRIAL"/>
    <property type="match status" value="1"/>
</dbReference>
<dbReference type="PANTHER" id="PTHR45866">
    <property type="entry name" value="DNA GYRASE/TOPOISOMERASE SUBUNIT B"/>
    <property type="match status" value="1"/>
</dbReference>
<dbReference type="Pfam" id="PF02518">
    <property type="entry name" value="HATPase_c"/>
    <property type="match status" value="1"/>
</dbReference>
<dbReference type="PRINTS" id="PR00418">
    <property type="entry name" value="TPI2FAMILY"/>
</dbReference>
<dbReference type="SMART" id="SM00387">
    <property type="entry name" value="HATPase_c"/>
    <property type="match status" value="1"/>
</dbReference>
<dbReference type="SMART" id="SM00433">
    <property type="entry name" value="TOP2c"/>
    <property type="match status" value="1"/>
</dbReference>
<dbReference type="SUPFAM" id="SSF55874">
    <property type="entry name" value="ATPase domain of HSP90 chaperone/DNA topoisomerase II/histidine kinase"/>
    <property type="match status" value="1"/>
</dbReference>
<gene>
    <name type="primary">gyrB</name>
</gene>
<evidence type="ECO:0000250" key="1">
    <source>
        <dbReference type="UniProtKB" id="P0AES6"/>
    </source>
</evidence>
<evidence type="ECO:0000305" key="2"/>
<sequence>MSNTYDSSSIKVLKGLDAVRKRPGMYIGDTDDGTGLHHMVFEVVDNAIDEALAGYCDEIIVTIHSDNSVSVRDDGRGIPTGIHEEEGVSAAEVIMTVLHAGGKFDDNSYKVSGGLHGVGVSVVNALSEKLELTIHRDGKIHQQIYRSGVPDDRLKVIGETDKSGTFVRFWPSLDTFKGETEF</sequence>
<name>GYRB_PROMI</name>
<feature type="chain" id="PRO_0000145328" description="DNA gyrase subunit B">
    <location>
        <begin position="1"/>
        <end position="182" status="greater than"/>
    </location>
</feature>
<feature type="non-terminal residue">
    <location>
        <position position="182"/>
    </location>
</feature>
<accession>P22840</accession>